<comment type="function">
    <text evidence="1">Required for maturation of ribosomal RNAs and formation of the large ribosomal subunit.</text>
</comment>
<comment type="subcellular location">
    <subcellularLocation>
        <location evidence="1">Nucleus</location>
        <location evidence="1">Nucleolus</location>
    </subcellularLocation>
    <subcellularLocation>
        <location evidence="1">Nucleus</location>
        <location evidence="1">Nucleoplasm</location>
    </subcellularLocation>
</comment>
<comment type="similarity">
    <text evidence="1">Belongs to the pescadillo family.</text>
</comment>
<comment type="sequence caution" evidence="2">
    <conflict type="erroneous initiation">
        <sequence resource="EMBL-CDS" id="EDP28218"/>
    </conflict>
</comment>
<organism>
    <name type="scientific">Brugia malayi</name>
    <name type="common">Filarial nematode worm</name>
    <dbReference type="NCBI Taxonomy" id="6279"/>
    <lineage>
        <taxon>Eukaryota</taxon>
        <taxon>Metazoa</taxon>
        <taxon>Ecdysozoa</taxon>
        <taxon>Nematoda</taxon>
        <taxon>Chromadorea</taxon>
        <taxon>Rhabditida</taxon>
        <taxon>Spirurina</taxon>
        <taxon>Spiruromorpha</taxon>
        <taxon>Filarioidea</taxon>
        <taxon>Onchocercidae</taxon>
        <taxon>Brugia</taxon>
    </lineage>
</organism>
<reference key="1">
    <citation type="journal article" date="2007" name="Science">
        <title>Draft genome of the filarial nematode parasite Brugia malayi.</title>
        <authorList>
            <person name="Ghedin E."/>
            <person name="Wang S."/>
            <person name="Spiro D."/>
            <person name="Caler E."/>
            <person name="Zhao Q."/>
            <person name="Crabtree J."/>
            <person name="Allen J.E."/>
            <person name="Delcher A.L."/>
            <person name="Guiliano D.B."/>
            <person name="Miranda-Saavedra D."/>
            <person name="Angiuoli S.V."/>
            <person name="Creasy T."/>
            <person name="Amedeo P."/>
            <person name="Haas B."/>
            <person name="El-Sayed N.M."/>
            <person name="Wortman J.R."/>
            <person name="Feldblyum T."/>
            <person name="Tallon L."/>
            <person name="Schatz M."/>
            <person name="Shumway M."/>
            <person name="Koo H."/>
            <person name="Salzberg S.L."/>
            <person name="Schobel S."/>
            <person name="Pertea M."/>
            <person name="Pop M."/>
            <person name="White O."/>
            <person name="Barton G.J."/>
            <person name="Carlow C.K.S."/>
            <person name="Crawford M.J."/>
            <person name="Daub J."/>
            <person name="Dimmic M.W."/>
            <person name="Estes C.F."/>
            <person name="Foster J.M."/>
            <person name="Ganatra M."/>
            <person name="Gregory W.F."/>
            <person name="Johnson N.M."/>
            <person name="Jin J."/>
            <person name="Komuniecki R."/>
            <person name="Korf I."/>
            <person name="Kumar S."/>
            <person name="Laney S."/>
            <person name="Li B.-W."/>
            <person name="Li W."/>
            <person name="Lindblom T.H."/>
            <person name="Lustigman S."/>
            <person name="Ma D."/>
            <person name="Maina C.V."/>
            <person name="Martin D.M."/>
            <person name="McCarter J.P."/>
            <person name="McReynolds L."/>
            <person name="Mitreva M."/>
            <person name="Nutman T.B."/>
            <person name="Parkinson J."/>
            <person name="Peregrin-Alvarez J.M."/>
            <person name="Poole C."/>
            <person name="Ren Q."/>
            <person name="Saunders L."/>
            <person name="Sluder A.E."/>
            <person name="Smith K."/>
            <person name="Stanke M."/>
            <person name="Unnasch T.R."/>
            <person name="Ware J."/>
            <person name="Wei A.D."/>
            <person name="Weil G."/>
            <person name="Williams D.J."/>
            <person name="Zhang Y."/>
            <person name="Williams S.A."/>
            <person name="Fraser-Liggett C."/>
            <person name="Slatko B."/>
            <person name="Blaxter M.L."/>
            <person name="Scott A.L."/>
        </authorList>
    </citation>
    <scope>NUCLEOTIDE SEQUENCE [LARGE SCALE GENOMIC DNA]</scope>
</reference>
<accession>A8QHQ0</accession>
<name>PESC_BRUMA</name>
<feature type="chain" id="PRO_0000370464" description="Pescadillo homolog">
    <location>
        <begin position="1"/>
        <end position="535"/>
    </location>
</feature>
<feature type="domain" description="BRCT" evidence="1">
    <location>
        <begin position="314"/>
        <end position="406"/>
    </location>
</feature>
<gene>
    <name evidence="3" type="primary">Bm13949</name>
    <name type="ORF">Bm1_57380</name>
</gene>
<dbReference type="EMBL" id="DS239957">
    <property type="protein sequence ID" value="EDP28218.1"/>
    <property type="status" value="ALT_INIT"/>
    <property type="molecule type" value="Genomic_DNA"/>
</dbReference>
<dbReference type="RefSeq" id="XP_001902934.1">
    <property type="nucleotide sequence ID" value="XM_001902899.1"/>
</dbReference>
<dbReference type="SMR" id="A8QHQ0"/>
<dbReference type="FunCoup" id="A8QHQ0">
    <property type="interactions" value="2290"/>
</dbReference>
<dbReference type="STRING" id="6279.A8QHQ0"/>
<dbReference type="WormBase" id="Bm13949">
    <property type="protein sequence ID" value="BM24668"/>
    <property type="gene ID" value="WBGene00234210"/>
    <property type="gene designation" value="Bm13949"/>
</dbReference>
<dbReference type="InParanoid" id="A8QHQ0"/>
<dbReference type="Proteomes" id="UP000006672">
    <property type="component" value="Unassembled WGS sequence"/>
</dbReference>
<dbReference type="GO" id="GO:0005654">
    <property type="term" value="C:nucleoplasm"/>
    <property type="evidence" value="ECO:0007669"/>
    <property type="project" value="UniProtKB-SubCell"/>
</dbReference>
<dbReference type="GO" id="GO:0070545">
    <property type="term" value="C:PeBoW complex"/>
    <property type="evidence" value="ECO:0007669"/>
    <property type="project" value="TreeGrafter"/>
</dbReference>
<dbReference type="GO" id="GO:0030687">
    <property type="term" value="C:preribosome, large subunit precursor"/>
    <property type="evidence" value="ECO:0007669"/>
    <property type="project" value="UniProtKB-UniRule"/>
</dbReference>
<dbReference type="GO" id="GO:0043021">
    <property type="term" value="F:ribonucleoprotein complex binding"/>
    <property type="evidence" value="ECO:0007669"/>
    <property type="project" value="UniProtKB-UniRule"/>
</dbReference>
<dbReference type="GO" id="GO:0003723">
    <property type="term" value="F:RNA binding"/>
    <property type="evidence" value="ECO:0007669"/>
    <property type="project" value="TreeGrafter"/>
</dbReference>
<dbReference type="GO" id="GO:0000466">
    <property type="term" value="P:maturation of 5.8S rRNA from tricistronic rRNA transcript (SSU-rRNA, 5.8S rRNA, LSU-rRNA)"/>
    <property type="evidence" value="ECO:0007669"/>
    <property type="project" value="UniProtKB-UniRule"/>
</dbReference>
<dbReference type="GO" id="GO:0000463">
    <property type="term" value="P:maturation of LSU-rRNA from tricistronic rRNA transcript (SSU-rRNA, 5.8S rRNA, LSU-rRNA)"/>
    <property type="evidence" value="ECO:0007669"/>
    <property type="project" value="UniProtKB-UniRule"/>
</dbReference>
<dbReference type="CDD" id="cd17709">
    <property type="entry name" value="BRCT_pescadillo_like"/>
    <property type="match status" value="1"/>
</dbReference>
<dbReference type="FunFam" id="3.40.50.10190:FF:000002">
    <property type="entry name" value="Pescadillo homolog"/>
    <property type="match status" value="1"/>
</dbReference>
<dbReference type="Gene3D" id="3.40.50.10190">
    <property type="entry name" value="BRCT domain"/>
    <property type="match status" value="1"/>
</dbReference>
<dbReference type="HAMAP" id="MF_03028">
    <property type="entry name" value="Pescadillo"/>
    <property type="match status" value="1"/>
</dbReference>
<dbReference type="InterPro" id="IPR001357">
    <property type="entry name" value="BRCT_dom"/>
</dbReference>
<dbReference type="InterPro" id="IPR036420">
    <property type="entry name" value="BRCT_dom_sf"/>
</dbReference>
<dbReference type="InterPro" id="IPR010613">
    <property type="entry name" value="PES"/>
</dbReference>
<dbReference type="PANTHER" id="PTHR12221">
    <property type="entry name" value="PESCADILLO - RELATED"/>
    <property type="match status" value="1"/>
</dbReference>
<dbReference type="PANTHER" id="PTHR12221:SF6">
    <property type="entry name" value="PESCADILLO HOMOLOG"/>
    <property type="match status" value="1"/>
</dbReference>
<dbReference type="Pfam" id="PF16589">
    <property type="entry name" value="BRCT_2"/>
    <property type="match status" value="1"/>
</dbReference>
<dbReference type="Pfam" id="PF06732">
    <property type="entry name" value="Pescadillo_N"/>
    <property type="match status" value="1"/>
</dbReference>
<dbReference type="SUPFAM" id="SSF52113">
    <property type="entry name" value="BRCT domain"/>
    <property type="match status" value="1"/>
</dbReference>
<dbReference type="PROSITE" id="PS50172">
    <property type="entry name" value="BRCT"/>
    <property type="match status" value="1"/>
</dbReference>
<proteinExistence type="inferred from homology"/>
<sequence>MRHFTYHSDVVVWQYIFESGAATNYITRGRALKKLQLSLKDFRRLCILKGVYPHEPLHKKKVNKGSTENRVYYYAKDINFLASEPIIRKFREYKIFLRKLTTAKAKRDEERIKTLYENRPEYQLDHIVKERYPTFESALRDLDDALCLLFAFAVLPHTKIITSSLVASSRRLTAEFNHYIIESNSLNKVFVSIKGIYYEAEVMGERVTWIVGHDRGMGHVSEVDFSVMATFAEFYVTMLEFVNFRLYQSVGLFYPPKLAFKSDKLEDDDQAEEGRVYSLACPLSKFENYEEQIDASIGDEVDNVLNEKLCDVEKRKQLFANYRFWLNREVPKDVLAIIIRSCGGLVSWENCPAAQYYENDAQITHQIVDRPLLDSHKNISRCYVQPQWVFDSFNRRSCLSIKKYLPGAILPPHLSPFSSDYDTYEEQLNQLRLLSKASANVTNRMETEAENKVQERKKIQKEKEVPIINVNKGRMHKENLQKKLNEKGHELKLREMLIPKKRRRVYSKIKRGIKRRVHEEKKLNEKRLKMLKAAD</sequence>
<keyword id="KW-0539">Nucleus</keyword>
<keyword id="KW-1185">Reference proteome</keyword>
<keyword id="KW-0690">Ribosome biogenesis</keyword>
<keyword id="KW-0698">rRNA processing</keyword>
<evidence type="ECO:0000255" key="1">
    <source>
        <dbReference type="HAMAP-Rule" id="MF_03028"/>
    </source>
</evidence>
<evidence type="ECO:0000305" key="2"/>
<evidence type="ECO:0000312" key="3">
    <source>
        <dbReference type="WormBase" id="Bm13949"/>
    </source>
</evidence>
<protein>
    <recommendedName>
        <fullName evidence="1">Pescadillo homolog</fullName>
    </recommendedName>
</protein>